<organism>
    <name type="scientific">Mus musculus</name>
    <name type="common">Mouse</name>
    <dbReference type="NCBI Taxonomy" id="10090"/>
    <lineage>
        <taxon>Eukaryota</taxon>
        <taxon>Metazoa</taxon>
        <taxon>Chordata</taxon>
        <taxon>Craniata</taxon>
        <taxon>Vertebrata</taxon>
        <taxon>Euteleostomi</taxon>
        <taxon>Mammalia</taxon>
        <taxon>Eutheria</taxon>
        <taxon>Euarchontoglires</taxon>
        <taxon>Glires</taxon>
        <taxon>Rodentia</taxon>
        <taxon>Myomorpha</taxon>
        <taxon>Muroidea</taxon>
        <taxon>Muridae</taxon>
        <taxon>Murinae</taxon>
        <taxon>Mus</taxon>
        <taxon>Mus</taxon>
    </lineage>
</organism>
<feature type="chain" id="PRO_0000305230" description="N-acetylaspartate synthetase">
    <location>
        <begin position="1"/>
        <end position="299"/>
    </location>
</feature>
<feature type="transmembrane region" description="Helical" evidence="3">
    <location>
        <begin position="118"/>
        <end position="138"/>
    </location>
</feature>
<feature type="domain" description="N-acetyltransferase" evidence="4">
    <location>
        <begin position="143"/>
        <end position="280"/>
    </location>
</feature>
<feature type="region of interest" description="Disordered" evidence="5">
    <location>
        <begin position="44"/>
        <end position="70"/>
    </location>
</feature>
<feature type="compositionally biased region" description="Pro residues" evidence="5">
    <location>
        <begin position="44"/>
        <end position="57"/>
    </location>
</feature>
<feature type="compositionally biased region" description="Gly residues" evidence="5">
    <location>
        <begin position="60"/>
        <end position="70"/>
    </location>
</feature>
<feature type="sequence conflict" description="In Ref. 1; BAE28014, 2; ABA54615 and 3; AAH75616." evidence="11" ref="1 2 3">
    <original>S</original>
    <variation>G</variation>
    <location>
        <position position="220"/>
    </location>
</feature>
<reference key="1">
    <citation type="journal article" date="2005" name="Science">
        <title>The transcriptional landscape of the mammalian genome.</title>
        <authorList>
            <person name="Carninci P."/>
            <person name="Kasukawa T."/>
            <person name="Katayama S."/>
            <person name="Gough J."/>
            <person name="Frith M.C."/>
            <person name="Maeda N."/>
            <person name="Oyama R."/>
            <person name="Ravasi T."/>
            <person name="Lenhard B."/>
            <person name="Wells C."/>
            <person name="Kodzius R."/>
            <person name="Shimokawa K."/>
            <person name="Bajic V.B."/>
            <person name="Brenner S.E."/>
            <person name="Batalov S."/>
            <person name="Forrest A.R."/>
            <person name="Zavolan M."/>
            <person name="Davis M.J."/>
            <person name="Wilming L.G."/>
            <person name="Aidinis V."/>
            <person name="Allen J.E."/>
            <person name="Ambesi-Impiombato A."/>
            <person name="Apweiler R."/>
            <person name="Aturaliya R.N."/>
            <person name="Bailey T.L."/>
            <person name="Bansal M."/>
            <person name="Baxter L."/>
            <person name="Beisel K.W."/>
            <person name="Bersano T."/>
            <person name="Bono H."/>
            <person name="Chalk A.M."/>
            <person name="Chiu K.P."/>
            <person name="Choudhary V."/>
            <person name="Christoffels A."/>
            <person name="Clutterbuck D.R."/>
            <person name="Crowe M.L."/>
            <person name="Dalla E."/>
            <person name="Dalrymple B.P."/>
            <person name="de Bono B."/>
            <person name="Della Gatta G."/>
            <person name="di Bernardo D."/>
            <person name="Down T."/>
            <person name="Engstrom P."/>
            <person name="Fagiolini M."/>
            <person name="Faulkner G."/>
            <person name="Fletcher C.F."/>
            <person name="Fukushima T."/>
            <person name="Furuno M."/>
            <person name="Futaki S."/>
            <person name="Gariboldi M."/>
            <person name="Georgii-Hemming P."/>
            <person name="Gingeras T.R."/>
            <person name="Gojobori T."/>
            <person name="Green R.E."/>
            <person name="Gustincich S."/>
            <person name="Harbers M."/>
            <person name="Hayashi Y."/>
            <person name="Hensch T.K."/>
            <person name="Hirokawa N."/>
            <person name="Hill D."/>
            <person name="Huminiecki L."/>
            <person name="Iacono M."/>
            <person name="Ikeo K."/>
            <person name="Iwama A."/>
            <person name="Ishikawa T."/>
            <person name="Jakt M."/>
            <person name="Kanapin A."/>
            <person name="Katoh M."/>
            <person name="Kawasawa Y."/>
            <person name="Kelso J."/>
            <person name="Kitamura H."/>
            <person name="Kitano H."/>
            <person name="Kollias G."/>
            <person name="Krishnan S.P."/>
            <person name="Kruger A."/>
            <person name="Kummerfeld S.K."/>
            <person name="Kurochkin I.V."/>
            <person name="Lareau L.F."/>
            <person name="Lazarevic D."/>
            <person name="Lipovich L."/>
            <person name="Liu J."/>
            <person name="Liuni S."/>
            <person name="McWilliam S."/>
            <person name="Madan Babu M."/>
            <person name="Madera M."/>
            <person name="Marchionni L."/>
            <person name="Matsuda H."/>
            <person name="Matsuzawa S."/>
            <person name="Miki H."/>
            <person name="Mignone F."/>
            <person name="Miyake S."/>
            <person name="Morris K."/>
            <person name="Mottagui-Tabar S."/>
            <person name="Mulder N."/>
            <person name="Nakano N."/>
            <person name="Nakauchi H."/>
            <person name="Ng P."/>
            <person name="Nilsson R."/>
            <person name="Nishiguchi S."/>
            <person name="Nishikawa S."/>
            <person name="Nori F."/>
            <person name="Ohara O."/>
            <person name="Okazaki Y."/>
            <person name="Orlando V."/>
            <person name="Pang K.C."/>
            <person name="Pavan W.J."/>
            <person name="Pavesi G."/>
            <person name="Pesole G."/>
            <person name="Petrovsky N."/>
            <person name="Piazza S."/>
            <person name="Reed J."/>
            <person name="Reid J.F."/>
            <person name="Ring B.Z."/>
            <person name="Ringwald M."/>
            <person name="Rost B."/>
            <person name="Ruan Y."/>
            <person name="Salzberg S.L."/>
            <person name="Sandelin A."/>
            <person name="Schneider C."/>
            <person name="Schoenbach C."/>
            <person name="Sekiguchi K."/>
            <person name="Semple C.A."/>
            <person name="Seno S."/>
            <person name="Sessa L."/>
            <person name="Sheng Y."/>
            <person name="Shibata Y."/>
            <person name="Shimada H."/>
            <person name="Shimada K."/>
            <person name="Silva D."/>
            <person name="Sinclair B."/>
            <person name="Sperling S."/>
            <person name="Stupka E."/>
            <person name="Sugiura K."/>
            <person name="Sultana R."/>
            <person name="Takenaka Y."/>
            <person name="Taki K."/>
            <person name="Tammoja K."/>
            <person name="Tan S.L."/>
            <person name="Tang S."/>
            <person name="Taylor M.S."/>
            <person name="Tegner J."/>
            <person name="Teichmann S.A."/>
            <person name="Ueda H.R."/>
            <person name="van Nimwegen E."/>
            <person name="Verardo R."/>
            <person name="Wei C.L."/>
            <person name="Yagi K."/>
            <person name="Yamanishi H."/>
            <person name="Zabarovsky E."/>
            <person name="Zhu S."/>
            <person name="Zimmer A."/>
            <person name="Hide W."/>
            <person name="Bult C."/>
            <person name="Grimmond S.M."/>
            <person name="Teasdale R.D."/>
            <person name="Liu E.T."/>
            <person name="Brusic V."/>
            <person name="Quackenbush J."/>
            <person name="Wahlestedt C."/>
            <person name="Mattick J.S."/>
            <person name="Hume D.A."/>
            <person name="Kai C."/>
            <person name="Sasaki D."/>
            <person name="Tomaru Y."/>
            <person name="Fukuda S."/>
            <person name="Kanamori-Katayama M."/>
            <person name="Suzuki M."/>
            <person name="Aoki J."/>
            <person name="Arakawa T."/>
            <person name="Iida J."/>
            <person name="Imamura K."/>
            <person name="Itoh M."/>
            <person name="Kato T."/>
            <person name="Kawaji H."/>
            <person name="Kawagashira N."/>
            <person name="Kawashima T."/>
            <person name="Kojima M."/>
            <person name="Kondo S."/>
            <person name="Konno H."/>
            <person name="Nakano K."/>
            <person name="Ninomiya N."/>
            <person name="Nishio T."/>
            <person name="Okada M."/>
            <person name="Plessy C."/>
            <person name="Shibata K."/>
            <person name="Shiraki T."/>
            <person name="Suzuki S."/>
            <person name="Tagami M."/>
            <person name="Waki K."/>
            <person name="Watahiki A."/>
            <person name="Okamura-Oho Y."/>
            <person name="Suzuki H."/>
            <person name="Kawai J."/>
            <person name="Hayashizaki Y."/>
        </authorList>
    </citation>
    <scope>NUCLEOTIDE SEQUENCE [LARGE SCALE MRNA]</scope>
    <source>
        <strain>C57BL/6J</strain>
        <tissue>Brain</tissue>
    </source>
</reference>
<reference key="2">
    <citation type="journal article" date="2007" name="J. Neurosci.">
        <title>A novel molecule 'Shati' is involved in methamphetamine-induced hyperlocomotion, sensitization, and conditioned place preference.</title>
        <authorList>
            <person name="Niwa M."/>
            <person name="Nitta A."/>
            <person name="Mizoguchi H."/>
            <person name="Ito Y."/>
            <person name="Noda Y."/>
            <person name="Nagai T."/>
            <person name="Nabeshima T."/>
        </authorList>
    </citation>
    <scope>NUCLEOTIDE SEQUENCE [MRNA] OF 21-299</scope>
    <scope>IDENTIFICATION</scope>
    <scope>TISSUE SPECIFICITY</scope>
    <scope>INDUCTION BY METHAMPHETAMINE</scope>
    <source>
        <strain>C57BL/6J</strain>
        <tissue>Brain</tissue>
    </source>
</reference>
<reference key="3">
    <citation type="journal article" date="2004" name="Genome Res.">
        <title>The status, quality, and expansion of the NIH full-length cDNA project: the Mammalian Gene Collection (MGC).</title>
        <authorList>
            <consortium name="The MGC Project Team"/>
        </authorList>
    </citation>
    <scope>NUCLEOTIDE SEQUENCE [LARGE SCALE MRNA] OF 21-299</scope>
    <source>
        <strain>C57BL/6J</strain>
        <strain>FVB/N</strain>
        <tissue>Brain</tissue>
        <tissue>Colon</tissue>
    </source>
</reference>
<reference key="4">
    <citation type="journal article" date="2008" name="J. Neurochem.">
        <title>A novel molecule 'shati' increases dopamine uptake via the induction of tumor necrosis factor-alpha in pheochromocytoma-12 cells.</title>
        <authorList>
            <person name="Niwa M."/>
            <person name="Nitta A."/>
            <person name="Cen X."/>
            <person name="Kitaichi K."/>
            <person name="Ozaki N."/>
            <person name="Yamada K."/>
            <person name="Nabeshima T."/>
        </authorList>
    </citation>
    <scope>FUNCTION</scope>
</reference>
<reference key="5">
    <citation type="journal article" date="2010" name="Biochem. J.">
        <title>Molecular identification of aspartate N-acetyltransferase and its mutation in hypoacetylaspartia.</title>
        <authorList>
            <person name="Wiame E."/>
            <person name="Tyteca D."/>
            <person name="Pierrot N."/>
            <person name="Collard F."/>
            <person name="Amyere M."/>
            <person name="Noel G."/>
            <person name="Desmedt J."/>
            <person name="Nassogne M.C."/>
            <person name="Vikkula M."/>
            <person name="Octave J.N."/>
            <person name="Vincent M.F."/>
            <person name="Courtoy P.J."/>
            <person name="Boltshauser E."/>
            <person name="van Schaftingen E."/>
        </authorList>
    </citation>
    <scope>FUNCTION</scope>
    <scope>CATALYTIC ACTIVITY</scope>
    <scope>TISSUE SPECIFICITY</scope>
</reference>
<reference key="6">
    <citation type="journal article" date="2010" name="Brain Res.">
        <title>Methamphetamine-induced neuronal protein NAT8L is the NAA biosynthetic enzyme: implications for specialized acetyl coenzyme A metabolism in the CNS.</title>
        <authorList>
            <person name="Ariyannur P.S."/>
            <person name="Moffett J.R."/>
            <person name="Manickam P."/>
            <person name="Pattabiraman N."/>
            <person name="Arun P."/>
            <person name="Nitta A."/>
            <person name="Nabeshima T."/>
            <person name="Madhavarao C.N."/>
            <person name="Namboodiri A.M."/>
        </authorList>
    </citation>
    <scope>FUNCTION</scope>
    <scope>SUBCELLULAR LOCATION</scope>
    <scope>TISSUE SPECIFICITY</scope>
    <scope>CATALYTIC ACTIVITY</scope>
    <scope>BIOPHYSICOCHEMICAL PROPERTIES</scope>
</reference>
<reference key="7">
    <citation type="journal article" date="2010" name="Cell">
        <title>A tissue-specific atlas of mouse protein phosphorylation and expression.</title>
        <authorList>
            <person name="Huttlin E.L."/>
            <person name="Jedrychowski M.P."/>
            <person name="Elias J.E."/>
            <person name="Goswami T."/>
            <person name="Rad R."/>
            <person name="Beausoleil S.A."/>
            <person name="Villen J."/>
            <person name="Haas W."/>
            <person name="Sowa M.E."/>
            <person name="Gygi S.P."/>
        </authorList>
    </citation>
    <scope>IDENTIFICATION BY MASS SPECTROMETRY [LARGE SCALE ANALYSIS]</scope>
    <source>
        <tissue>Brain</tissue>
    </source>
</reference>
<reference key="8">
    <citation type="journal article" date="2010" name="J. Biol. Chem.">
        <title>Molecular characterization of N-acetylaspartylglutamate synthetase.</title>
        <authorList>
            <person name="Becker I."/>
            <person name="Lodder J."/>
            <person name="Gieselmann V."/>
            <person name="Eckhardt M."/>
        </authorList>
    </citation>
    <scope>FUNCTION</scope>
    <scope>CATALYTIC ACTIVITY</scope>
</reference>
<name>NAT8L_MOUSE</name>
<proteinExistence type="evidence at protein level"/>
<accession>Q3UGX3</accession>
<accession>Q3UH43</accession>
<accession>Q6DID6</accession>
<accession>Q8K065</accession>
<comment type="function">
    <text evidence="2 7 8 9 10">Catalyzes the synthesis of N-acetylaspartate acid (NAA) from L-aspartate and acetyl-CoA (PubMed:19807691, PubMed:20385109, PubMed:20643647). Promotes dopamine uptake by regulating TNF-alpha expression (PubMed:19014384). Attenuates methamphetamine-induced inhibition of dopamine uptake (By similarity).</text>
</comment>
<comment type="catalytic activity">
    <reaction evidence="8 9 10">
        <text>L-aspartate + acetyl-CoA = N-acetyl-L-aspartate + CoA + H(+)</text>
        <dbReference type="Rhea" id="RHEA:14165"/>
        <dbReference type="ChEBI" id="CHEBI:15378"/>
        <dbReference type="ChEBI" id="CHEBI:16953"/>
        <dbReference type="ChEBI" id="CHEBI:29991"/>
        <dbReference type="ChEBI" id="CHEBI:57287"/>
        <dbReference type="ChEBI" id="CHEBI:57288"/>
        <dbReference type="EC" id="2.3.1.17"/>
    </reaction>
    <physiologicalReaction direction="left-to-right" evidence="12">
        <dbReference type="Rhea" id="RHEA:14166"/>
    </physiologicalReaction>
</comment>
<comment type="activity regulation">
    <text evidence="2">Aminooxyacetic acid (AOAA) blocks its activity in both cytoplasm and mitochondria.</text>
</comment>
<comment type="biophysicochemical properties">
    <kinetics>
        <KM evidence="9">90 uM for aspartate</KM>
    </kinetics>
</comment>
<comment type="subcellular location">
    <subcellularLocation>
        <location evidence="2">Cytoplasm</location>
    </subcellularLocation>
    <subcellularLocation>
        <location evidence="1">Microsome membrane</location>
        <topology evidence="3">Single-pass membrane protein</topology>
    </subcellularLocation>
    <subcellularLocation>
        <location evidence="2">Mitochondrion membrane</location>
        <topology evidence="3">Single-pass membrane protein</topology>
    </subcellularLocation>
    <subcellularLocation>
        <location evidence="8">Endoplasmic reticulum membrane</location>
        <topology evidence="3">Single-pass membrane protein</topology>
    </subcellularLocation>
</comment>
<comment type="tissue specificity">
    <text evidence="6 8 9">Expressed in brain, kidney, liver and spleen. In brain, present in neurons but not in astrocytes (at protein level). Expressed in brain, thymus and spleen.</text>
</comment>
<comment type="induction">
    <text evidence="6">By methamphetamine in brain, via dopamine receptor activation (at protein level).</text>
</comment>
<comment type="miscellaneous">
    <text>Seems to modulate behavioral effects induced by methamphetamine in vivo.</text>
</comment>
<comment type="miscellaneous">
    <text>'Shati' is the name of the symbol at Nagoya castle in Japan.</text>
</comment>
<comment type="similarity">
    <text evidence="11">Belongs to the NAT8 family.</text>
</comment>
<comment type="sequence caution" evidence="11">
    <conflict type="erroneous initiation">
        <sequence resource="EMBL-CDS" id="AAH75616"/>
    </conflict>
    <text>Truncated N-terminus.</text>
</comment>
<comment type="sequence caution" evidence="11">
    <conflict type="erroneous initiation">
        <sequence resource="EMBL-CDS" id="ABA54615"/>
    </conflict>
    <text>Truncated N-terminus.</text>
</comment>
<dbReference type="EC" id="2.3.1.17" evidence="8 9 10"/>
<dbReference type="EMBL" id="AK147307">
    <property type="protein sequence ID" value="BAE27836.1"/>
    <property type="molecule type" value="mRNA"/>
</dbReference>
<dbReference type="EMBL" id="AK147594">
    <property type="protein sequence ID" value="BAE28014.1"/>
    <property type="molecule type" value="mRNA"/>
</dbReference>
<dbReference type="EMBL" id="AK147703">
    <property type="protein sequence ID" value="BAE28084.1"/>
    <property type="molecule type" value="mRNA"/>
</dbReference>
<dbReference type="EMBL" id="DQ174094">
    <property type="protein sequence ID" value="ABA54615.1"/>
    <property type="status" value="ALT_INIT"/>
    <property type="molecule type" value="mRNA"/>
</dbReference>
<dbReference type="EMBL" id="BC034068">
    <property type="protein sequence ID" value="AAH34068.1"/>
    <property type="molecule type" value="mRNA"/>
</dbReference>
<dbReference type="EMBL" id="BC075616">
    <property type="protein sequence ID" value="AAH75616.1"/>
    <property type="status" value="ALT_INIT"/>
    <property type="molecule type" value="mRNA"/>
</dbReference>
<dbReference type="CCDS" id="CCDS19210.1"/>
<dbReference type="RefSeq" id="NP_001001985.3">
    <property type="nucleotide sequence ID" value="NM_001001985.3"/>
</dbReference>
<dbReference type="BioGRID" id="234689">
    <property type="interactions" value="1"/>
</dbReference>
<dbReference type="FunCoup" id="Q3UGX3">
    <property type="interactions" value="151"/>
</dbReference>
<dbReference type="STRING" id="10090.ENSMUSP00000059313"/>
<dbReference type="PhosphoSitePlus" id="Q3UGX3"/>
<dbReference type="SwissPalm" id="Q3UGX3"/>
<dbReference type="PaxDb" id="10090-ENSMUSP00000059313"/>
<dbReference type="PeptideAtlas" id="Q3UGX3"/>
<dbReference type="ProteomicsDB" id="287608"/>
<dbReference type="DNASU" id="269642"/>
<dbReference type="GeneID" id="269642"/>
<dbReference type="KEGG" id="mmu:269642"/>
<dbReference type="UCSC" id="uc008xbs.1">
    <property type="organism name" value="mouse"/>
</dbReference>
<dbReference type="AGR" id="MGI:2447776"/>
<dbReference type="CTD" id="339983"/>
<dbReference type="MGI" id="MGI:2447776">
    <property type="gene designation" value="Nat8l"/>
</dbReference>
<dbReference type="eggNOG" id="KOG3139">
    <property type="taxonomic scope" value="Eukaryota"/>
</dbReference>
<dbReference type="InParanoid" id="Q3UGX3"/>
<dbReference type="OrthoDB" id="41532at2759"/>
<dbReference type="PhylomeDB" id="Q3UGX3"/>
<dbReference type="TreeFam" id="TF324687"/>
<dbReference type="BRENDA" id="2.3.1.17">
    <property type="organism ID" value="3474"/>
</dbReference>
<dbReference type="Reactome" id="R-MMU-8963693">
    <property type="pathway name" value="Aspartate and asparagine metabolism"/>
</dbReference>
<dbReference type="BioGRID-ORCS" id="269642">
    <property type="hits" value="1 hit in 82 CRISPR screens"/>
</dbReference>
<dbReference type="ChiTaRS" id="Nat8l">
    <property type="organism name" value="mouse"/>
</dbReference>
<dbReference type="PRO" id="PR:Q3UGX3"/>
<dbReference type="Proteomes" id="UP000000589">
    <property type="component" value="Unplaced"/>
</dbReference>
<dbReference type="RNAct" id="Q3UGX3">
    <property type="molecule type" value="protein"/>
</dbReference>
<dbReference type="GO" id="GO:0005789">
    <property type="term" value="C:endoplasmic reticulum membrane"/>
    <property type="evidence" value="ECO:0000314"/>
    <property type="project" value="UniProtKB"/>
</dbReference>
<dbReference type="GO" id="GO:0005759">
    <property type="term" value="C:mitochondrial matrix"/>
    <property type="evidence" value="ECO:0000314"/>
    <property type="project" value="MGI"/>
</dbReference>
<dbReference type="GO" id="GO:0031966">
    <property type="term" value="C:mitochondrial membrane"/>
    <property type="evidence" value="ECO:0007669"/>
    <property type="project" value="UniProtKB-SubCell"/>
</dbReference>
<dbReference type="GO" id="GO:0005739">
    <property type="term" value="C:mitochondrion"/>
    <property type="evidence" value="ECO:0000250"/>
    <property type="project" value="UniProtKB"/>
</dbReference>
<dbReference type="GO" id="GO:0017188">
    <property type="term" value="F:L-aspartate N-acetyltransferase activity"/>
    <property type="evidence" value="ECO:0000314"/>
    <property type="project" value="UniProtKB"/>
</dbReference>
<dbReference type="GO" id="GO:0006083">
    <property type="term" value="P:acetate metabolic process"/>
    <property type="evidence" value="ECO:0000316"/>
    <property type="project" value="MGI"/>
</dbReference>
<dbReference type="GO" id="GO:0006531">
    <property type="term" value="P:aspartate metabolic process"/>
    <property type="evidence" value="ECO:0000316"/>
    <property type="project" value="MGI"/>
</dbReference>
<dbReference type="GO" id="GO:0051586">
    <property type="term" value="P:positive regulation of dopamine uptake involved in synaptic transmission"/>
    <property type="evidence" value="ECO:0000314"/>
    <property type="project" value="UniProtKB"/>
</dbReference>
<dbReference type="CDD" id="cd04301">
    <property type="entry name" value="NAT_SF"/>
    <property type="match status" value="1"/>
</dbReference>
<dbReference type="FunFam" id="3.40.630.30:FF:000057">
    <property type="entry name" value="N-acetylaspartate synthetase"/>
    <property type="match status" value="1"/>
</dbReference>
<dbReference type="Gene3D" id="3.40.630.30">
    <property type="match status" value="1"/>
</dbReference>
<dbReference type="InterPro" id="IPR016181">
    <property type="entry name" value="Acyl_CoA_acyltransferase"/>
</dbReference>
<dbReference type="InterPro" id="IPR000182">
    <property type="entry name" value="GNAT_dom"/>
</dbReference>
<dbReference type="InterPro" id="IPR050769">
    <property type="entry name" value="NAT_camello-type"/>
</dbReference>
<dbReference type="PANTHER" id="PTHR13947">
    <property type="entry name" value="GNAT FAMILY N-ACETYLTRANSFERASE"/>
    <property type="match status" value="1"/>
</dbReference>
<dbReference type="PANTHER" id="PTHR13947:SF11">
    <property type="entry name" value="N-ACETYLASPARTATE SYNTHETASE"/>
    <property type="match status" value="1"/>
</dbReference>
<dbReference type="Pfam" id="PF00583">
    <property type="entry name" value="Acetyltransf_1"/>
    <property type="match status" value="1"/>
</dbReference>
<dbReference type="SUPFAM" id="SSF55729">
    <property type="entry name" value="Acyl-CoA N-acyltransferases (Nat)"/>
    <property type="match status" value="1"/>
</dbReference>
<dbReference type="PROSITE" id="PS51186">
    <property type="entry name" value="GNAT"/>
    <property type="match status" value="1"/>
</dbReference>
<sequence length="299" mass="32777">MHCGPPDMVCETKIVATEDHEALPGAKKDALLVAAGAMWPPLPAAPGPAAAPPPAAGPQPHGGTGGAGPPEGRGVCIREFRAAEQEAARRIFYDGILERIPNTAFRGLRQHPRTQLLYALLAALCFAVTRSLLLTCLVPAGLLALRYYYSRKVILAYLECALHTDMADIEQYYMKPPGSCFWVAVLDGNVVGIVAARAHEEDNTVELLRMSVDSRFRGKSIAKALGRRVLEFAMLHNYSAVVLGTTAVKVAAHKLYESLGFRHMGASDHYVLPGMTLSLAERLFFQVRYHRYRLQLREE</sequence>
<protein>
    <recommendedName>
        <fullName>N-acetylaspartate synthetase</fullName>
        <shortName>NAA synthetase</shortName>
        <ecNumber evidence="8 9 10">2.3.1.17</ecNumber>
    </recommendedName>
    <alternativeName>
        <fullName>N-acetyltransferase 8-like protein</fullName>
    </alternativeName>
    <alternativeName>
        <fullName>Protein Shati</fullName>
    </alternativeName>
</protein>
<gene>
    <name type="primary">Nat8l</name>
</gene>
<evidence type="ECO:0000250" key="1">
    <source>
        <dbReference type="UniProtKB" id="D3ZVU9"/>
    </source>
</evidence>
<evidence type="ECO:0000250" key="2">
    <source>
        <dbReference type="UniProtKB" id="Q8N9F0"/>
    </source>
</evidence>
<evidence type="ECO:0000255" key="3"/>
<evidence type="ECO:0000255" key="4">
    <source>
        <dbReference type="PROSITE-ProRule" id="PRU00532"/>
    </source>
</evidence>
<evidence type="ECO:0000256" key="5">
    <source>
        <dbReference type="SAM" id="MobiDB-lite"/>
    </source>
</evidence>
<evidence type="ECO:0000269" key="6">
    <source>
    </source>
</evidence>
<evidence type="ECO:0000269" key="7">
    <source>
    </source>
</evidence>
<evidence type="ECO:0000269" key="8">
    <source>
    </source>
</evidence>
<evidence type="ECO:0000269" key="9">
    <source>
    </source>
</evidence>
<evidence type="ECO:0000269" key="10">
    <source>
    </source>
</evidence>
<evidence type="ECO:0000305" key="11"/>
<evidence type="ECO:0000305" key="12">
    <source>
    </source>
</evidence>
<keyword id="KW-0012">Acyltransferase</keyword>
<keyword id="KW-0963">Cytoplasm</keyword>
<keyword id="KW-0256">Endoplasmic reticulum</keyword>
<keyword id="KW-0472">Membrane</keyword>
<keyword id="KW-0492">Microsome</keyword>
<keyword id="KW-0496">Mitochondrion</keyword>
<keyword id="KW-1185">Reference proteome</keyword>
<keyword id="KW-0808">Transferase</keyword>
<keyword id="KW-0812">Transmembrane</keyword>
<keyword id="KW-1133">Transmembrane helix</keyword>